<reference key="1">
    <citation type="journal article" date="1992" name="EMBO J.">
        <title>Gene amplification at a locus encoding a putative Na+/H+ antiporter confers sodium and lithium tolerance in fission yeast.</title>
        <authorList>
            <person name="Jia Z.-P."/>
            <person name="McCullough N."/>
            <person name="Martel R."/>
            <person name="Hemmingsen S."/>
            <person name="Young P.G."/>
        </authorList>
    </citation>
    <scope>NUCLEOTIDE SEQUENCE [GENOMIC DNA]</scope>
</reference>
<reference key="2">
    <citation type="journal article" date="2002" name="Nature">
        <title>The genome sequence of Schizosaccharomyces pombe.</title>
        <authorList>
            <person name="Wood V."/>
            <person name="Gwilliam R."/>
            <person name="Rajandream M.A."/>
            <person name="Lyne M.H."/>
            <person name="Lyne R."/>
            <person name="Stewart A."/>
            <person name="Sgouros J.G."/>
            <person name="Peat N."/>
            <person name="Hayles J."/>
            <person name="Baker S.G."/>
            <person name="Basham D."/>
            <person name="Bowman S."/>
            <person name="Brooks K."/>
            <person name="Brown D."/>
            <person name="Brown S."/>
            <person name="Chillingworth T."/>
            <person name="Churcher C.M."/>
            <person name="Collins M."/>
            <person name="Connor R."/>
            <person name="Cronin A."/>
            <person name="Davis P."/>
            <person name="Feltwell T."/>
            <person name="Fraser A."/>
            <person name="Gentles S."/>
            <person name="Goble A."/>
            <person name="Hamlin N."/>
            <person name="Harris D.E."/>
            <person name="Hidalgo J."/>
            <person name="Hodgson G."/>
            <person name="Holroyd S."/>
            <person name="Hornsby T."/>
            <person name="Howarth S."/>
            <person name="Huckle E.J."/>
            <person name="Hunt S."/>
            <person name="Jagels K."/>
            <person name="James K.D."/>
            <person name="Jones L."/>
            <person name="Jones M."/>
            <person name="Leather S."/>
            <person name="McDonald S."/>
            <person name="McLean J."/>
            <person name="Mooney P."/>
            <person name="Moule S."/>
            <person name="Mungall K.L."/>
            <person name="Murphy L.D."/>
            <person name="Niblett D."/>
            <person name="Odell C."/>
            <person name="Oliver K."/>
            <person name="O'Neil S."/>
            <person name="Pearson D."/>
            <person name="Quail M.A."/>
            <person name="Rabbinowitsch E."/>
            <person name="Rutherford K.M."/>
            <person name="Rutter S."/>
            <person name="Saunders D."/>
            <person name="Seeger K."/>
            <person name="Sharp S."/>
            <person name="Skelton J."/>
            <person name="Simmonds M.N."/>
            <person name="Squares R."/>
            <person name="Squares S."/>
            <person name="Stevens K."/>
            <person name="Taylor K."/>
            <person name="Taylor R.G."/>
            <person name="Tivey A."/>
            <person name="Walsh S.V."/>
            <person name="Warren T."/>
            <person name="Whitehead S."/>
            <person name="Woodward J.R."/>
            <person name="Volckaert G."/>
            <person name="Aert R."/>
            <person name="Robben J."/>
            <person name="Grymonprez B."/>
            <person name="Weltjens I."/>
            <person name="Vanstreels E."/>
            <person name="Rieger M."/>
            <person name="Schaefer M."/>
            <person name="Mueller-Auer S."/>
            <person name="Gabel C."/>
            <person name="Fuchs M."/>
            <person name="Duesterhoeft A."/>
            <person name="Fritzc C."/>
            <person name="Holzer E."/>
            <person name="Moestl D."/>
            <person name="Hilbert H."/>
            <person name="Borzym K."/>
            <person name="Langer I."/>
            <person name="Beck A."/>
            <person name="Lehrach H."/>
            <person name="Reinhardt R."/>
            <person name="Pohl T.M."/>
            <person name="Eger P."/>
            <person name="Zimmermann W."/>
            <person name="Wedler H."/>
            <person name="Wambutt R."/>
            <person name="Purnelle B."/>
            <person name="Goffeau A."/>
            <person name="Cadieu E."/>
            <person name="Dreano S."/>
            <person name="Gloux S."/>
            <person name="Lelaure V."/>
            <person name="Mottier S."/>
            <person name="Galibert F."/>
            <person name="Aves S.J."/>
            <person name="Xiang Z."/>
            <person name="Hunt C."/>
            <person name="Moore K."/>
            <person name="Hurst S.M."/>
            <person name="Lucas M."/>
            <person name="Rochet M."/>
            <person name="Gaillardin C."/>
            <person name="Tallada V.A."/>
            <person name="Garzon A."/>
            <person name="Thode G."/>
            <person name="Daga R.R."/>
            <person name="Cruzado L."/>
            <person name="Jimenez J."/>
            <person name="Sanchez M."/>
            <person name="del Rey F."/>
            <person name="Benito J."/>
            <person name="Dominguez A."/>
            <person name="Revuelta J.L."/>
            <person name="Moreno S."/>
            <person name="Armstrong J."/>
            <person name="Forsburg S.L."/>
            <person name="Cerutti L."/>
            <person name="Lowe T."/>
            <person name="McCombie W.R."/>
            <person name="Paulsen I."/>
            <person name="Potashkin J."/>
            <person name="Shpakovski G.V."/>
            <person name="Ussery D."/>
            <person name="Barrell B.G."/>
            <person name="Nurse P."/>
        </authorList>
    </citation>
    <scope>NUCLEOTIDE SEQUENCE [LARGE SCALE GENOMIC DNA]</scope>
    <source>
        <strain>972 / ATCC 24843</strain>
    </source>
</reference>
<reference key="3">
    <citation type="journal article" date="1997" name="FEBS Lett.">
        <title>Identification and localization of the sod2 gene product in fission yeast.</title>
        <authorList>
            <person name="Dibrov P."/>
            <person name="Smith J.J."/>
            <person name="Young P.G."/>
            <person name="Fliegel L."/>
        </authorList>
    </citation>
    <scope>FUNCTION</scope>
    <scope>SUBCELLULAR LOCATION</scope>
</reference>
<reference key="4">
    <citation type="journal article" date="2008" name="J. Proteome Res.">
        <title>Phosphoproteome analysis of fission yeast.</title>
        <authorList>
            <person name="Wilson-Grady J.T."/>
            <person name="Villen J."/>
            <person name="Gygi S.P."/>
        </authorList>
    </citation>
    <scope>PHOSPHORYLATION [LARGE SCALE ANALYSIS] AT SER-449 AND SER-451</scope>
    <scope>IDENTIFICATION BY MASS SPECTROMETRY</scope>
</reference>
<keyword id="KW-0002">3D-structure</keyword>
<keyword id="KW-0050">Antiport</keyword>
<keyword id="KW-1003">Cell membrane</keyword>
<keyword id="KW-0325">Glycoprotein</keyword>
<keyword id="KW-0406">Ion transport</keyword>
<keyword id="KW-0472">Membrane</keyword>
<keyword id="KW-0597">Phosphoprotein</keyword>
<keyword id="KW-1185">Reference proteome</keyword>
<keyword id="KW-0915">Sodium</keyword>
<keyword id="KW-0739">Sodium transport</keyword>
<keyword id="KW-0812">Transmembrane</keyword>
<keyword id="KW-1133">Transmembrane helix</keyword>
<keyword id="KW-0813">Transport</keyword>
<sequence>MGWRQLDIDKVHLALIVAGGFITFFCYFSEVFRKKLLVGEAVLGSITGLIFGPHAAKLVDPFSWGDHGDYLTVEICRIVLDVRVFASAIELPGAYFQHNFRSIIVMLLPVMAYGWLVTAGFAYALFPQINFLGSLLIAGCITSTDPVLSALIVGEGPLAKKTPERIRSLLIAESGCNDGMAVPFFYFAIKLLTVKPSRNAGRDWVLLVVLYECAFGIFFGCVIGYLLSFILKHAQKYRLIDAISYYSLPLAIPLLCSGIGTIIGVDDLLMSFFAGILFNWNDLFSKNISACSVPAFIDQTFSLLFFTYYGTIIPWNNFNWSVEGLPVWRLIVFSILTLVCRRLPVVFSVKPLVPDIKTWKEALFVGHFGPIGVCAVYMAFLAKLLLSPDEIEKSIYESTTVFSTLNEIIWPIISFVILSSIIVHGFSIHVLVIWGKLKSLYLNRKVTKSDSDLELQVIGVDKSQEDYV</sequence>
<proteinExistence type="evidence at protein level"/>
<accession>P36606</accession>
<name>NAH_SCHPO</name>
<comment type="function">
    <text evidence="3">Sodium export from cell, takes up external protons in exchange for internal sodium ions (PubMed:9094438). Involved in regulation of pH (PubMed:9094438).</text>
</comment>
<comment type="subcellular location">
    <subcellularLocation>
        <location evidence="3">Cell membrane</location>
        <topology evidence="1">Multi-pass membrane protein</topology>
    </subcellularLocation>
</comment>
<comment type="similarity">
    <text evidence="5">Belongs to the fungal Na(+)/H(+) exchanger family.</text>
</comment>
<protein>
    <recommendedName>
        <fullName>Na(+)/H(+) antiporter</fullName>
    </recommendedName>
</protein>
<gene>
    <name evidence="6" type="primary">nhe1</name>
    <name evidence="4" type="synonym">sod2</name>
    <name evidence="6" type="ORF">SPAC977.10</name>
</gene>
<dbReference type="EMBL" id="Z11736">
    <property type="protein sequence ID" value="CAA77796.1"/>
    <property type="molecule type" value="Genomic_DNA"/>
</dbReference>
<dbReference type="EMBL" id="CU329670">
    <property type="protein sequence ID" value="CAB69632.1"/>
    <property type="molecule type" value="Genomic_DNA"/>
</dbReference>
<dbReference type="PIR" id="S20951">
    <property type="entry name" value="S20951"/>
</dbReference>
<dbReference type="RefSeq" id="NP_592782.1">
    <property type="nucleotide sequence ID" value="NM_001018182.2"/>
</dbReference>
<dbReference type="PDB" id="2M7X">
    <property type="method" value="NMR"/>
    <property type="chains" value="A=125-154"/>
</dbReference>
<dbReference type="PDBsum" id="2M7X"/>
<dbReference type="SMR" id="P36606"/>
<dbReference type="BioGRID" id="279667">
    <property type="interactions" value="6"/>
</dbReference>
<dbReference type="FunCoup" id="P36606">
    <property type="interactions" value="66"/>
</dbReference>
<dbReference type="STRING" id="284812.P36606"/>
<dbReference type="TCDB" id="2.A.36.4.3">
    <property type="family name" value="the monovalent cation:proton antiporter-1 (cpa1) family"/>
</dbReference>
<dbReference type="GlyCosmos" id="P36606">
    <property type="glycosylation" value="2 sites, No reported glycans"/>
</dbReference>
<dbReference type="iPTMnet" id="P36606"/>
<dbReference type="PaxDb" id="4896-SPAC977.10.1"/>
<dbReference type="EnsemblFungi" id="SPAC977.10.1">
    <property type="protein sequence ID" value="SPAC977.10.1:pep"/>
    <property type="gene ID" value="SPAC977.10"/>
</dbReference>
<dbReference type="GeneID" id="2543239"/>
<dbReference type="KEGG" id="spo:2543239"/>
<dbReference type="PomBase" id="SPAC977.10">
    <property type="gene designation" value="nhe1"/>
</dbReference>
<dbReference type="VEuPathDB" id="FungiDB:SPAC977.10"/>
<dbReference type="eggNOG" id="KOG4505">
    <property type="taxonomic scope" value="Eukaryota"/>
</dbReference>
<dbReference type="HOGENOM" id="CLU_008635_5_0_1"/>
<dbReference type="InParanoid" id="P36606"/>
<dbReference type="OMA" id="HFARKEG"/>
<dbReference type="PhylomeDB" id="P36606"/>
<dbReference type="EvolutionaryTrace" id="P36606"/>
<dbReference type="PRO" id="PR:P36606"/>
<dbReference type="Proteomes" id="UP000002485">
    <property type="component" value="Chromosome I"/>
</dbReference>
<dbReference type="GO" id="GO:0042175">
    <property type="term" value="C:nuclear outer membrane-endoplasmic reticulum membrane network"/>
    <property type="evidence" value="ECO:0000314"/>
    <property type="project" value="PomBase"/>
</dbReference>
<dbReference type="GO" id="GO:1990578">
    <property type="term" value="C:perinuclear endoplasmic reticulum membrane"/>
    <property type="evidence" value="ECO:0000314"/>
    <property type="project" value="PomBase"/>
</dbReference>
<dbReference type="GO" id="GO:0005886">
    <property type="term" value="C:plasma membrane"/>
    <property type="evidence" value="ECO:0000314"/>
    <property type="project" value="PomBase"/>
</dbReference>
<dbReference type="GO" id="GO:0031520">
    <property type="term" value="C:plasma membrane of cell tip"/>
    <property type="evidence" value="ECO:0000314"/>
    <property type="project" value="PomBase"/>
</dbReference>
<dbReference type="GO" id="GO:0005628">
    <property type="term" value="C:prospore membrane"/>
    <property type="evidence" value="ECO:0000314"/>
    <property type="project" value="PomBase"/>
</dbReference>
<dbReference type="GO" id="GO:0015385">
    <property type="term" value="F:sodium:proton antiporter activity"/>
    <property type="evidence" value="ECO:0000314"/>
    <property type="project" value="PomBase"/>
</dbReference>
<dbReference type="GO" id="GO:0051452">
    <property type="term" value="P:intracellular pH reduction"/>
    <property type="evidence" value="ECO:0000315"/>
    <property type="project" value="PomBase"/>
</dbReference>
<dbReference type="GO" id="GO:0030007">
    <property type="term" value="P:intracellular potassium ion homeostasis"/>
    <property type="evidence" value="ECO:0000318"/>
    <property type="project" value="GO_Central"/>
</dbReference>
<dbReference type="GO" id="GO:0006883">
    <property type="term" value="P:intracellular sodium ion homeostasis"/>
    <property type="evidence" value="ECO:0000315"/>
    <property type="project" value="PomBase"/>
</dbReference>
<dbReference type="GO" id="GO:0120029">
    <property type="term" value="P:proton export across plasma membrane"/>
    <property type="evidence" value="ECO:0007669"/>
    <property type="project" value="InterPro"/>
</dbReference>
<dbReference type="GO" id="GO:1902600">
    <property type="term" value="P:proton transmembrane transport"/>
    <property type="evidence" value="ECO:0000315"/>
    <property type="project" value="PomBase"/>
</dbReference>
<dbReference type="GO" id="GO:0042391">
    <property type="term" value="P:regulation of membrane potential"/>
    <property type="evidence" value="ECO:0007669"/>
    <property type="project" value="InterPro"/>
</dbReference>
<dbReference type="GO" id="GO:0036376">
    <property type="term" value="P:sodium ion export across plasma membrane"/>
    <property type="evidence" value="ECO:0000315"/>
    <property type="project" value="PomBase"/>
</dbReference>
<dbReference type="GO" id="GO:0035725">
    <property type="term" value="P:sodium ion transmembrane transport"/>
    <property type="evidence" value="ECO:0000318"/>
    <property type="project" value="GO_Central"/>
</dbReference>
<dbReference type="InterPro" id="IPR006153">
    <property type="entry name" value="Cation/H_exchanger_TM"/>
</dbReference>
<dbReference type="InterPro" id="IPR004712">
    <property type="entry name" value="Na+/H+_antiporter_fungi"/>
</dbReference>
<dbReference type="PANTHER" id="PTHR31382">
    <property type="entry name" value="NA(+)/H(+) ANTIPORTER"/>
    <property type="match status" value="1"/>
</dbReference>
<dbReference type="PANTHER" id="PTHR31382:SF4">
    <property type="entry name" value="NA(+)_H(+) ANTIPORTER"/>
    <property type="match status" value="1"/>
</dbReference>
<dbReference type="Pfam" id="PF00999">
    <property type="entry name" value="Na_H_Exchanger"/>
    <property type="match status" value="1"/>
</dbReference>
<evidence type="ECO:0000255" key="1"/>
<evidence type="ECO:0000269" key="2">
    <source>
    </source>
</evidence>
<evidence type="ECO:0000269" key="3">
    <source>
    </source>
</evidence>
<evidence type="ECO:0000303" key="4">
    <source>
    </source>
</evidence>
<evidence type="ECO:0000305" key="5"/>
<evidence type="ECO:0000312" key="6">
    <source>
        <dbReference type="PomBase" id="SPAC977.10"/>
    </source>
</evidence>
<evidence type="ECO:0007829" key="7">
    <source>
        <dbReference type="PDB" id="2M7X"/>
    </source>
</evidence>
<organism>
    <name type="scientific">Schizosaccharomyces pombe (strain 972 / ATCC 24843)</name>
    <name type="common">Fission yeast</name>
    <dbReference type="NCBI Taxonomy" id="284812"/>
    <lineage>
        <taxon>Eukaryota</taxon>
        <taxon>Fungi</taxon>
        <taxon>Dikarya</taxon>
        <taxon>Ascomycota</taxon>
        <taxon>Taphrinomycotina</taxon>
        <taxon>Schizosaccharomycetes</taxon>
        <taxon>Schizosaccharomycetales</taxon>
        <taxon>Schizosaccharomycetaceae</taxon>
        <taxon>Schizosaccharomyces</taxon>
    </lineage>
</organism>
<feature type="chain" id="PRO_0000052405" description="Na(+)/H(+) antiporter">
    <location>
        <begin position="1"/>
        <end position="468"/>
    </location>
</feature>
<feature type="transmembrane region" description="Helical" evidence="1">
    <location>
        <begin position="12"/>
        <end position="32"/>
    </location>
</feature>
<feature type="transmembrane region" description="Helical" evidence="1">
    <location>
        <begin position="36"/>
        <end position="56"/>
    </location>
</feature>
<feature type="transmembrane region" description="Helical" evidence="1">
    <location>
        <begin position="81"/>
        <end position="96"/>
    </location>
</feature>
<feature type="transmembrane region" description="Helical" evidence="1">
    <location>
        <begin position="103"/>
        <end position="123"/>
    </location>
</feature>
<feature type="transmembrane region" description="Helical" evidence="1">
    <location>
        <begin position="133"/>
        <end position="153"/>
    </location>
</feature>
<feature type="transmembrane region" description="Helical" evidence="1">
    <location>
        <begin position="169"/>
        <end position="189"/>
    </location>
</feature>
<feature type="transmembrane region" description="Helical" evidence="1">
    <location>
        <begin position="204"/>
        <end position="224"/>
    </location>
</feature>
<feature type="transmembrane region" description="Helical" evidence="1">
    <location>
        <begin position="258"/>
        <end position="278"/>
    </location>
</feature>
<feature type="transmembrane region" description="Helical" evidence="1">
    <location>
        <begin position="293"/>
        <end position="313"/>
    </location>
</feature>
<feature type="transmembrane region" description="Helical" evidence="1">
    <location>
        <begin position="320"/>
        <end position="340"/>
    </location>
</feature>
<feature type="transmembrane region" description="Helical" evidence="1">
    <location>
        <begin position="362"/>
        <end position="382"/>
    </location>
</feature>
<feature type="transmembrane region" description="Helical" evidence="1">
    <location>
        <begin position="408"/>
        <end position="428"/>
    </location>
</feature>
<feature type="modified residue" description="Phosphoserine" evidence="2">
    <location>
        <position position="449"/>
    </location>
</feature>
<feature type="modified residue" description="Phosphoserine" evidence="2">
    <location>
        <position position="451"/>
    </location>
</feature>
<feature type="glycosylation site" description="N-linked (GlcNAc...) asparagine" evidence="1">
    <location>
        <position position="287"/>
    </location>
</feature>
<feature type="glycosylation site" description="N-linked (GlcNAc...) asparagine" evidence="1">
    <location>
        <position position="319"/>
    </location>
</feature>
<feature type="helix" evidence="7">
    <location>
        <begin position="130"/>
        <end position="142"/>
    </location>
</feature>
<feature type="helix" evidence="7">
    <location>
        <begin position="147"/>
        <end position="152"/>
    </location>
</feature>